<dbReference type="EMBL" id="J02699">
    <property type="protein sequence ID" value="AAA24444.1"/>
    <property type="molecule type" value="Genomic_DNA"/>
</dbReference>
<dbReference type="EMBL" id="U00096">
    <property type="protein sequence ID" value="AAC74888.1"/>
    <property type="molecule type" value="Genomic_DNA"/>
</dbReference>
<dbReference type="EMBL" id="AP009048">
    <property type="protein sequence ID" value="BAA15625.1"/>
    <property type="molecule type" value="Genomic_DNA"/>
</dbReference>
<dbReference type="EMBL" id="M36404">
    <property type="protein sequence ID" value="AAA24111.1"/>
    <property type="status" value="ALT_TERM"/>
    <property type="molecule type" value="Genomic_DNA"/>
</dbReference>
<dbReference type="PIR" id="A30285">
    <property type="entry name" value="WQECMP"/>
</dbReference>
<dbReference type="RefSeq" id="NP_416332.1">
    <property type="nucleotide sequence ID" value="NC_000913.3"/>
</dbReference>
<dbReference type="RefSeq" id="WP_000406926.1">
    <property type="nucleotide sequence ID" value="NZ_STEB01000009.1"/>
</dbReference>
<dbReference type="PDB" id="6K1H">
    <property type="method" value="EM"/>
    <property type="resolution" value="3.52 A"/>
    <property type="chains" value="B/E/Y=1-266"/>
</dbReference>
<dbReference type="PDB" id="7DYR">
    <property type="method" value="EM"/>
    <property type="resolution" value="2.28 A"/>
    <property type="chains" value="B/E/Y=1-266"/>
</dbReference>
<dbReference type="PDBsum" id="6K1H"/>
<dbReference type="PDBsum" id="7DYR"/>
<dbReference type="EMDB" id="EMD-30923"/>
<dbReference type="EMDB" id="EMD-9906"/>
<dbReference type="SMR" id="P69801"/>
<dbReference type="BioGRID" id="4259145">
    <property type="interactions" value="502"/>
</dbReference>
<dbReference type="ComplexPortal" id="CPX-5968">
    <property type="entry name" value="D-mannose-specific enzyme II complex"/>
</dbReference>
<dbReference type="FunCoup" id="P69801">
    <property type="interactions" value="120"/>
</dbReference>
<dbReference type="IntAct" id="P69801">
    <property type="interactions" value="1"/>
</dbReference>
<dbReference type="STRING" id="511145.b1818"/>
<dbReference type="TCDB" id="4.A.6.1.1">
    <property type="family name" value="the pts mannose-fructose-sorbose (man) family"/>
</dbReference>
<dbReference type="jPOST" id="P69801"/>
<dbReference type="PaxDb" id="511145-b1818"/>
<dbReference type="EnsemblBacteria" id="AAC74888">
    <property type="protein sequence ID" value="AAC74888"/>
    <property type="gene ID" value="b1818"/>
</dbReference>
<dbReference type="GeneID" id="93776067"/>
<dbReference type="GeneID" id="946332"/>
<dbReference type="KEGG" id="ecj:JW1807"/>
<dbReference type="KEGG" id="eco:b1818"/>
<dbReference type="KEGG" id="ecoc:C3026_10355"/>
<dbReference type="PATRIC" id="fig|1411691.4.peg.433"/>
<dbReference type="EchoBASE" id="EB0563"/>
<dbReference type="eggNOG" id="COG3715">
    <property type="taxonomic scope" value="Bacteria"/>
</dbReference>
<dbReference type="HOGENOM" id="CLU_069101_0_0_6"/>
<dbReference type="InParanoid" id="P69801"/>
<dbReference type="OMA" id="QWIAVCL"/>
<dbReference type="OrthoDB" id="7058816at2"/>
<dbReference type="PhylomeDB" id="P69801"/>
<dbReference type="BioCyc" id="EcoCyc:MANY-MONOMER"/>
<dbReference type="BioCyc" id="MetaCyc:MANY-MONOMER"/>
<dbReference type="PRO" id="PR:P69801"/>
<dbReference type="Proteomes" id="UP000000625">
    <property type="component" value="Chromosome"/>
</dbReference>
<dbReference type="GO" id="GO:0016020">
    <property type="term" value="C:membrane"/>
    <property type="evidence" value="ECO:0007005"/>
    <property type="project" value="UniProtKB"/>
</dbReference>
<dbReference type="GO" id="GO:0005886">
    <property type="term" value="C:plasma membrane"/>
    <property type="evidence" value="ECO:0000314"/>
    <property type="project" value="EcoCyc"/>
</dbReference>
<dbReference type="GO" id="GO:1902495">
    <property type="term" value="C:transmembrane transporter complex"/>
    <property type="evidence" value="ECO:0000353"/>
    <property type="project" value="ComplexPortal"/>
</dbReference>
<dbReference type="GO" id="GO:0022870">
    <property type="term" value="F:protein-N(PI)-phosphohistidine-mannose phosphotransferase system transporter activity"/>
    <property type="evidence" value="ECO:0000314"/>
    <property type="project" value="EcoCyc"/>
</dbReference>
<dbReference type="GO" id="GO:0098708">
    <property type="term" value="P:D-glucose import across plasma membrane"/>
    <property type="evidence" value="ECO:0000314"/>
    <property type="project" value="EcoCyc"/>
</dbReference>
<dbReference type="GO" id="GO:1990539">
    <property type="term" value="P:fructose import across plasma membrane"/>
    <property type="evidence" value="ECO:0000269"/>
    <property type="project" value="EcoCyc"/>
</dbReference>
<dbReference type="GO" id="GO:0015761">
    <property type="term" value="P:mannose transmembrane transport"/>
    <property type="evidence" value="ECO:0000314"/>
    <property type="project" value="EcoCyc"/>
</dbReference>
<dbReference type="GO" id="GO:0015764">
    <property type="term" value="P:N-acetylglucosamine transport"/>
    <property type="evidence" value="ECO:0000269"/>
    <property type="project" value="EcoCyc"/>
</dbReference>
<dbReference type="GO" id="GO:0009401">
    <property type="term" value="P:phosphoenolpyruvate-dependent sugar phosphotransferase system"/>
    <property type="evidence" value="ECO:0000314"/>
    <property type="project" value="ComplexPortal"/>
</dbReference>
<dbReference type="InterPro" id="IPR050303">
    <property type="entry name" value="GatZ_KbaZ_carbometab"/>
</dbReference>
<dbReference type="InterPro" id="IPR004700">
    <property type="entry name" value="PTS_IIC_man"/>
</dbReference>
<dbReference type="NCBIfam" id="TIGR00822">
    <property type="entry name" value="EII-Sor"/>
    <property type="match status" value="1"/>
</dbReference>
<dbReference type="NCBIfam" id="NF011647">
    <property type="entry name" value="PRK15065.1"/>
    <property type="match status" value="1"/>
</dbReference>
<dbReference type="PANTHER" id="PTHR32502">
    <property type="entry name" value="N-ACETYLGALACTOSAMINE PERMEASE II COMPONENT-RELATED"/>
    <property type="match status" value="1"/>
</dbReference>
<dbReference type="PANTHER" id="PTHR32502:SF4">
    <property type="entry name" value="PTS SYSTEM MANNOSE-SPECIFIC EIIC COMPONENT"/>
    <property type="match status" value="1"/>
</dbReference>
<dbReference type="Pfam" id="PF03609">
    <property type="entry name" value="EII-Sor"/>
    <property type="match status" value="1"/>
</dbReference>
<dbReference type="PROSITE" id="PS51106">
    <property type="entry name" value="PTS_EIIC_TYPE_4"/>
    <property type="match status" value="1"/>
</dbReference>
<organism>
    <name type="scientific">Escherichia coli (strain K12)</name>
    <dbReference type="NCBI Taxonomy" id="83333"/>
    <lineage>
        <taxon>Bacteria</taxon>
        <taxon>Pseudomonadati</taxon>
        <taxon>Pseudomonadota</taxon>
        <taxon>Gammaproteobacteria</taxon>
        <taxon>Enterobacterales</taxon>
        <taxon>Enterobacteriaceae</taxon>
        <taxon>Escherichia</taxon>
    </lineage>
</organism>
<reference key="1">
    <citation type="journal article" date="1987" name="J. Biol. Chem.">
        <title>The mannose permease of Escherichia coli consists of three different proteins. Amino acid sequence and function in sugar transport, sugar phosphorylation, and penetration of phage lambda DNA.</title>
        <authorList>
            <person name="Erni B."/>
            <person name="Zanolari B."/>
            <person name="Kocher H.P."/>
        </authorList>
    </citation>
    <scope>NUCLEOTIDE SEQUENCE [GENOMIC DNA]</scope>
    <scope>FUNCTION</scope>
    <scope>FORMYLATION AT MET-1</scope>
</reference>
<reference key="2">
    <citation type="journal article" date="1996" name="DNA Res.">
        <title>A 460-kb DNA sequence of the Escherichia coli K-12 genome corresponding to the 40.1-50.0 min region on the linkage map.</title>
        <authorList>
            <person name="Itoh T."/>
            <person name="Aiba H."/>
            <person name="Baba T."/>
            <person name="Fujita K."/>
            <person name="Hayashi K."/>
            <person name="Inada T."/>
            <person name="Isono K."/>
            <person name="Kasai H."/>
            <person name="Kimura S."/>
            <person name="Kitakawa M."/>
            <person name="Kitagawa M."/>
            <person name="Makino K."/>
            <person name="Miki T."/>
            <person name="Mizobuchi K."/>
            <person name="Mori H."/>
            <person name="Mori T."/>
            <person name="Motomura K."/>
            <person name="Nakade S."/>
            <person name="Nakamura Y."/>
            <person name="Nashimoto H."/>
            <person name="Nishio Y."/>
            <person name="Oshima T."/>
            <person name="Saito N."/>
            <person name="Sampei G."/>
            <person name="Seki Y."/>
            <person name="Sivasundaram S."/>
            <person name="Tagami H."/>
            <person name="Takeda J."/>
            <person name="Takemoto K."/>
            <person name="Wada C."/>
            <person name="Yamamoto Y."/>
            <person name="Horiuchi T."/>
        </authorList>
    </citation>
    <scope>NUCLEOTIDE SEQUENCE [LARGE SCALE GENOMIC DNA]</scope>
    <source>
        <strain>K12 / W3110 / ATCC 27325 / DSM 5911</strain>
    </source>
</reference>
<reference key="3">
    <citation type="journal article" date="1997" name="Science">
        <title>The complete genome sequence of Escherichia coli K-12.</title>
        <authorList>
            <person name="Blattner F.R."/>
            <person name="Plunkett G. III"/>
            <person name="Bloch C.A."/>
            <person name="Perna N.T."/>
            <person name="Burland V."/>
            <person name="Riley M."/>
            <person name="Collado-Vides J."/>
            <person name="Glasner J.D."/>
            <person name="Rode C.K."/>
            <person name="Mayhew G.F."/>
            <person name="Gregor J."/>
            <person name="Davis N.W."/>
            <person name="Kirkpatrick H.A."/>
            <person name="Goeden M.A."/>
            <person name="Rose D.J."/>
            <person name="Mau B."/>
            <person name="Shao Y."/>
        </authorList>
    </citation>
    <scope>NUCLEOTIDE SEQUENCE [LARGE SCALE GENOMIC DNA]</scope>
    <source>
        <strain>K12 / MG1655 / ATCC 47076</strain>
    </source>
</reference>
<reference key="4">
    <citation type="journal article" date="2006" name="Mol. Syst. Biol.">
        <title>Highly accurate genome sequences of Escherichia coli K-12 strains MG1655 and W3110.</title>
        <authorList>
            <person name="Hayashi K."/>
            <person name="Morooka N."/>
            <person name="Yamamoto Y."/>
            <person name="Fujita K."/>
            <person name="Isono K."/>
            <person name="Choi S."/>
            <person name="Ohtsubo E."/>
            <person name="Baba T."/>
            <person name="Wanner B.L."/>
            <person name="Mori H."/>
            <person name="Horiuchi T."/>
        </authorList>
    </citation>
    <scope>NUCLEOTIDE SEQUENCE [LARGE SCALE GENOMIC DNA]</scope>
    <source>
        <strain>K12 / W3110 / ATCC 27325 / DSM 5911</strain>
    </source>
</reference>
<reference key="5">
    <citation type="journal article" date="1988" name="FEMS Microbiol. Lett.">
        <title>Nucleotide sequence of manX(ptsL) encoding the enzyme III(Man) (II-A(Man)) function in the phosphotransferase system of Escherichia coli K-12.</title>
        <authorList>
            <person name="Saris P.E.J."/>
            <person name="Liljestroem P."/>
            <person name="Palva E.T."/>
        </authorList>
    </citation>
    <scope>NUCLEOTIDE SEQUENCE [GENOMIC DNA] OF 1-40</scope>
    <source>
        <strain>K12</strain>
    </source>
</reference>
<reference key="6">
    <citation type="journal article" date="1974" name="Proc. Natl. Acad. Sci. U.S.A.">
        <title>Phosphotransferase-system enzymes as chemoreceptors for certain sugars in Escherichia coli chemotaxis.</title>
        <authorList>
            <person name="Adler J."/>
            <person name="Epstein W."/>
        </authorList>
    </citation>
    <scope>FUNCTION</scope>
</reference>
<reference key="7">
    <citation type="journal article" date="1978" name="Mol. Gen. Genet.">
        <title>E. coli K-12 pel mutants, which block phage lambda DNA injection, coincide with ptsM, which determines a component of a sugar transport system.</title>
        <authorList>
            <person name="Elliott J."/>
            <person name="Arber W."/>
        </authorList>
    </citation>
    <scope>FUNCTION</scope>
</reference>
<reference key="8">
    <citation type="journal article" date="1985" name="J. Biol. Chem.">
        <title>The mannose-permease of the bacterial phosphotransferase system. Gene cloning and purification of the enzyme IIMan/IIIMan complex of Escherichia coli.</title>
        <authorList>
            <person name="Erni B."/>
            <person name="Zanolari B."/>
        </authorList>
    </citation>
    <scope>FUNCTION</scope>
</reference>
<reference key="9">
    <citation type="journal article" date="1996" name="Eur. J. Biochem.">
        <title>Membrane topology of the mannose transporter of Escherichia coli K12.</title>
        <authorList>
            <person name="Huber F."/>
            <person name="Erni B."/>
        </authorList>
    </citation>
    <scope>TOPOLOGY</scope>
    <scope>SUBCELLULAR LOCATION</scope>
</reference>
<reference key="10">
    <citation type="journal article" date="1994" name="Biol. Chem. Hoppe-Seyler">
        <title>The mannose transporter of Escherichia coli K12: oligomeric structure, and function of two conserved cysteines.</title>
        <authorList>
            <person name="Rhiel E."/>
            <person name="Flukiger K."/>
            <person name="Wehrli C."/>
            <person name="Erni B."/>
        </authorList>
    </citation>
    <scope>TOPOLOGY</scope>
</reference>
<reference key="11">
    <citation type="journal article" date="1998" name="Mol. Microbiol.">
        <title>Control of the expression of the manXYZ operon in Escherichia coli: Mlc is a negative regulator of the mannose PTS.</title>
        <authorList>
            <person name="Plumbridge J."/>
        </authorList>
    </citation>
    <scope>INDUCTION</scope>
</reference>
<reference key="12">
    <citation type="journal article" date="2001" name="J. Mol. Microbiol. Biotechnol.">
        <title>Regulation of PTS gene expression by the homologous transcriptional regulators, Mlc and NagC, in Escherichia coli (or how two similar repressors can behave differently).</title>
        <authorList>
            <person name="Plumbridge J."/>
        </authorList>
    </citation>
    <scope>INDUCTION</scope>
</reference>
<reference key="13">
    <citation type="journal article" date="2005" name="Science">
        <title>Global topology analysis of the Escherichia coli inner membrane proteome.</title>
        <authorList>
            <person name="Daley D.O."/>
            <person name="Rapp M."/>
            <person name="Granseth E."/>
            <person name="Melen K."/>
            <person name="Drew D."/>
            <person name="von Heijne G."/>
        </authorList>
    </citation>
    <scope>TOPOLOGY [LARGE SCALE ANALYSIS]</scope>
    <scope>SUBCELLULAR LOCATION</scope>
    <source>
        <strain>K12 / MG1655 / ATCC 47076</strain>
    </source>
</reference>
<reference key="14">
    <citation type="journal article" date="2020" name="Biochim. Biophys. Acta">
        <title>The mannose phosphotransferase system (Man-PTS) - Mannose transporter and receptor for bacteriocins and bacteriophages.</title>
        <authorList>
            <person name="Jeckelmann J.M."/>
            <person name="Erni B."/>
        </authorList>
    </citation>
    <scope>REVIEW</scope>
    <scope>TOPOLOGY</scope>
</reference>
<reference evidence="16" key="15">
    <citation type="journal article" date="2019" name="Cell Res.">
        <title>Structure of the mannose transporter of the bacterial phosphotransferase system.</title>
        <authorList>
            <person name="Liu X."/>
            <person name="Zeng J."/>
            <person name="Huang K."/>
            <person name="Wang J."/>
        </authorList>
    </citation>
    <scope>STRUCTURE BY ELECTRON MICROSCOPY (3.52 ANGSTROMS)</scope>
    <scope>SUBUNIT</scope>
    <scope>SUBCELLULAR LOCATION</scope>
    <scope>TOPOLOGY</scope>
    <scope>MUTAGENESIS OF ASN-65</scope>
</reference>
<name>PTNC_ECOLI</name>
<evidence type="ECO:0000255" key="1">
    <source>
        <dbReference type="PROSITE-ProRule" id="PRU00429"/>
    </source>
</evidence>
<evidence type="ECO:0000269" key="2">
    <source>
    </source>
</evidence>
<evidence type="ECO:0000269" key="3">
    <source>
    </source>
</evidence>
<evidence type="ECO:0000269" key="4">
    <source>
    </source>
</evidence>
<evidence type="ECO:0000269" key="5">
    <source>
    </source>
</evidence>
<evidence type="ECO:0000269" key="6">
    <source>
    </source>
</evidence>
<evidence type="ECO:0000269" key="7">
    <source>
    </source>
</evidence>
<evidence type="ECO:0000269" key="8">
    <source>
    </source>
</evidence>
<evidence type="ECO:0000269" key="9">
    <source>
    </source>
</evidence>
<evidence type="ECO:0000269" key="10">
    <source>
    </source>
</evidence>
<evidence type="ECO:0000303" key="11">
    <source>
    </source>
</evidence>
<evidence type="ECO:0000303" key="12">
    <source>
    </source>
</evidence>
<evidence type="ECO:0000305" key="13">
    <source>
    </source>
</evidence>
<evidence type="ECO:0000305" key="14">
    <source>
    </source>
</evidence>
<evidence type="ECO:0000305" key="15">
    <source>
    </source>
</evidence>
<evidence type="ECO:0007744" key="16">
    <source>
        <dbReference type="PDB" id="6K1H"/>
    </source>
</evidence>
<evidence type="ECO:0007829" key="17">
    <source>
        <dbReference type="PDB" id="7DYR"/>
    </source>
</evidence>
<gene>
    <name type="primary">manY</name>
    <name type="synonym">pel</name>
    <name type="synonym">ptsP</name>
    <name type="ordered locus">b1818</name>
    <name type="ordered locus">JW1807</name>
</gene>
<comment type="function">
    <text evidence="4 5">The phosphoenolpyruvate-dependent sugar phosphotransferase system (sugar PTS), a major carbohydrate active transport system, catalyzes the phosphorylation of incoming sugar substrates concomitantly with their translocation across the cell membrane. The enzyme II ManXYZ PTS system is involved in mannose transport.</text>
</comment>
<comment type="function">
    <text evidence="7 8">Also functions as a receptor for bacterial chemotaxis and is required for infection of the cell by bacteriophage lambda where it most likely functions as a pore for penetration of lambda DNA.</text>
</comment>
<comment type="subunit">
    <text evidence="6">Homotrimer of protomers that are composed of two subunits, IIC and IID.</text>
</comment>
<comment type="subcellular location">
    <subcellularLocation>
        <location evidence="1 3 6 9">Cell inner membrane</location>
        <topology evidence="1 6">Multi-pass membrane protein</topology>
    </subcellularLocation>
</comment>
<comment type="induction">
    <text evidence="2 10">Expression of the manXYZ operon is positively regulated by the cAMP-CRP complex and negatively regulated by the Mlc transcriptional repressor (PubMed:11361067, PubMed:9484892). Expression is also weakly repressed by NagC (PubMed:11361067, PubMed:9484892).</text>
</comment>
<comment type="domain">
    <text evidence="1">The PTS EIIC type-4 domain forms the PTS system translocation channel and contains the specific substrate-binding site.</text>
</comment>
<feature type="chain" id="PRO_0000186646" description="PTS system mannose-specific EIIC component">
    <location>
        <begin position="1"/>
        <end position="266"/>
    </location>
</feature>
<feature type="topological domain" description="Periplasmic" evidence="6 14">
    <location>
        <begin position="1"/>
        <end position="4"/>
    </location>
</feature>
<feature type="intramembrane region" evidence="14">
    <location>
        <begin position="5"/>
        <end position="43"/>
    </location>
</feature>
<feature type="topological domain" description="Periplasmic" evidence="14">
    <location>
        <begin position="44"/>
        <end position="46"/>
    </location>
</feature>
<feature type="intramembrane region" evidence="14">
    <location>
        <begin position="47"/>
        <end position="86"/>
    </location>
</feature>
<feature type="topological domain" description="Periplasmic" evidence="14">
    <location>
        <begin position="87"/>
        <end position="90"/>
    </location>
</feature>
<feature type="transmembrane region" evidence="14">
    <location>
        <begin position="91"/>
        <end position="124"/>
    </location>
</feature>
<feature type="topological domain" description="Cytoplasmic" evidence="14">
    <location>
        <begin position="125"/>
        <end position="132"/>
    </location>
</feature>
<feature type="transmembrane region" evidence="14">
    <location>
        <begin position="133"/>
        <end position="160"/>
    </location>
</feature>
<feature type="topological domain" description="Periplasmic" evidence="14">
    <location>
        <begin position="161"/>
        <end position="176"/>
    </location>
</feature>
<feature type="transmembrane region" evidence="14">
    <location>
        <begin position="177"/>
        <end position="200"/>
    </location>
</feature>
<feature type="topological domain" description="Cytoplasmic" evidence="14">
    <location>
        <begin position="201"/>
        <end position="207"/>
    </location>
</feature>
<feature type="transmembrane region" evidence="14">
    <location>
        <begin position="208"/>
        <end position="218"/>
    </location>
</feature>
<feature type="topological domain" description="Periplasmic" evidence="14">
    <location>
        <begin position="219"/>
        <end position="224"/>
    </location>
</feature>
<feature type="transmembrane region" evidence="14">
    <location>
        <begin position="225"/>
        <end position="242"/>
    </location>
</feature>
<feature type="topological domain" description="Cytoplasmic" evidence="3 6 9 14 15">
    <location>
        <begin position="243"/>
        <end position="266"/>
    </location>
</feature>
<feature type="domain" description="PTS EIIC type-4" evidence="1">
    <location>
        <begin position="3"/>
        <end position="237"/>
    </location>
</feature>
<feature type="modified residue" description="N-formylmethionine" evidence="13">
    <location>
        <position position="1"/>
    </location>
</feature>
<feature type="mutagenesis site" description="Significantly impairs the mannose transport capacity." evidence="6">
    <original>N</original>
    <variation>P</variation>
    <location>
        <position position="65"/>
    </location>
</feature>
<feature type="helix" evidence="17">
    <location>
        <begin position="5"/>
        <end position="24"/>
    </location>
</feature>
<feature type="helix" evidence="17">
    <location>
        <begin position="32"/>
        <end position="43"/>
    </location>
</feature>
<feature type="helix" evidence="17">
    <location>
        <begin position="46"/>
        <end position="60"/>
    </location>
</feature>
<feature type="helix" evidence="17">
    <location>
        <begin position="74"/>
        <end position="86"/>
    </location>
</feature>
<feature type="turn" evidence="17">
    <location>
        <begin position="87"/>
        <end position="89"/>
    </location>
</feature>
<feature type="helix" evidence="17">
    <location>
        <begin position="92"/>
        <end position="97"/>
    </location>
</feature>
<feature type="helix" evidence="17">
    <location>
        <begin position="99"/>
        <end position="116"/>
    </location>
</feature>
<feature type="helix" evidence="17">
    <location>
        <begin position="118"/>
        <end position="128"/>
    </location>
</feature>
<feature type="turn" evidence="17">
    <location>
        <begin position="129"/>
        <end position="131"/>
    </location>
</feature>
<feature type="helix" evidence="17">
    <location>
        <begin position="133"/>
        <end position="142"/>
    </location>
</feature>
<feature type="helix" evidence="17">
    <location>
        <begin position="144"/>
        <end position="160"/>
    </location>
</feature>
<feature type="turn" evidence="17">
    <location>
        <begin position="161"/>
        <end position="163"/>
    </location>
</feature>
<feature type="helix" evidence="17">
    <location>
        <begin position="166"/>
        <end position="170"/>
    </location>
</feature>
<feature type="helix" evidence="17">
    <location>
        <begin position="177"/>
        <end position="201"/>
    </location>
</feature>
<feature type="turn" evidence="17">
    <location>
        <begin position="205"/>
        <end position="207"/>
    </location>
</feature>
<feature type="helix" evidence="17">
    <location>
        <begin position="208"/>
        <end position="219"/>
    </location>
</feature>
<feature type="helix" evidence="17">
    <location>
        <begin position="224"/>
        <end position="240"/>
    </location>
</feature>
<feature type="turn" evidence="17">
    <location>
        <begin position="243"/>
        <end position="245"/>
    </location>
</feature>
<keyword id="KW-0002">3D-structure</keyword>
<keyword id="KW-0997">Cell inner membrane</keyword>
<keyword id="KW-1003">Cell membrane</keyword>
<keyword id="KW-0291">Formylation</keyword>
<keyword id="KW-0472">Membrane</keyword>
<keyword id="KW-0598">Phosphotransferase system</keyword>
<keyword id="KW-1185">Reference proteome</keyword>
<keyword id="KW-0762">Sugar transport</keyword>
<keyword id="KW-0812">Transmembrane</keyword>
<keyword id="KW-1133">Transmembrane helix</keyword>
<keyword id="KW-0813">Transport</keyword>
<proteinExistence type="evidence at protein level"/>
<accession>P69801</accession>
<accession>P08187</accession>
<accession>Q47351</accession>
<sequence length="266" mass="27636">MEITTLQIVLVFIVACIAGMGSILDEFQFHRPLIACTLVGIVLGDMKTGIIIGGTLEMIALGWMNIGAAVAPDAALASIISTILVIAGHQSIGAGIALAIPLAAAGQVLTIIVRTITVAFQHAADKAADNGNLTAISWIHVSSLFLQAMRVAIPAVIVALSVGTSEVQNMLNAIPEVVTNGLNIAGGMIVVVGYAMVINMMRAGYLMPFFYLGFVTAAFTNFNLVALGVIGTVMAVLYIQLSPKYNRVAGAPAQAAGNNDLDNELD</sequence>
<protein>
    <recommendedName>
        <fullName evidence="12">PTS system mannose-specific EIIC component</fullName>
    </recommendedName>
    <alternativeName>
        <fullName evidence="11">EII-P-Man</fullName>
    </alternativeName>
    <alternativeName>
        <fullName evidence="12">EIIC-Man</fullName>
    </alternativeName>
    <alternativeName>
        <fullName evidence="12">Mannose permease IIC component</fullName>
    </alternativeName>
</protein>